<comment type="function">
    <text evidence="1">Catalyzes the isomerization between 2-isopropylmalate and 3-isopropylmalate, via the formation of 2-isopropylmaleate.</text>
</comment>
<comment type="catalytic activity">
    <reaction evidence="1">
        <text>(2R,3S)-3-isopropylmalate = (2S)-2-isopropylmalate</text>
        <dbReference type="Rhea" id="RHEA:32287"/>
        <dbReference type="ChEBI" id="CHEBI:1178"/>
        <dbReference type="ChEBI" id="CHEBI:35121"/>
        <dbReference type="EC" id="4.2.1.33"/>
    </reaction>
</comment>
<comment type="pathway">
    <text evidence="1">Amino-acid biosynthesis; L-leucine biosynthesis; L-leucine from 3-methyl-2-oxobutanoate: step 2/4.</text>
</comment>
<comment type="subunit">
    <text evidence="1">Heterodimer of LeuC and LeuD.</text>
</comment>
<comment type="similarity">
    <text evidence="1">Belongs to the LeuD family. LeuD type 1 subfamily.</text>
</comment>
<proteinExistence type="inferred from homology"/>
<evidence type="ECO:0000255" key="1">
    <source>
        <dbReference type="HAMAP-Rule" id="MF_01031"/>
    </source>
</evidence>
<protein>
    <recommendedName>
        <fullName evidence="1">3-isopropylmalate dehydratase small subunit</fullName>
        <ecNumber evidence="1">4.2.1.33</ecNumber>
    </recommendedName>
    <alternativeName>
        <fullName evidence="1">Alpha-IPM isomerase</fullName>
        <shortName evidence="1">IPMI</shortName>
    </alternativeName>
    <alternativeName>
        <fullName evidence="1">Isopropylmalate isomerase</fullName>
    </alternativeName>
</protein>
<reference key="1">
    <citation type="journal article" date="2010" name="Genome Biol. Evol.">
        <title>Continuing evolution of Burkholderia mallei through genome reduction and large-scale rearrangements.</title>
        <authorList>
            <person name="Losada L."/>
            <person name="Ronning C.M."/>
            <person name="DeShazer D."/>
            <person name="Woods D."/>
            <person name="Fedorova N."/>
            <person name="Kim H.S."/>
            <person name="Shabalina S.A."/>
            <person name="Pearson T.R."/>
            <person name="Brinkac L."/>
            <person name="Tan P."/>
            <person name="Nandi T."/>
            <person name="Crabtree J."/>
            <person name="Badger J."/>
            <person name="Beckstrom-Sternberg S."/>
            <person name="Saqib M."/>
            <person name="Schutzer S.E."/>
            <person name="Keim P."/>
            <person name="Nierman W.C."/>
        </authorList>
    </citation>
    <scope>NUCLEOTIDE SEQUENCE [LARGE SCALE GENOMIC DNA]</scope>
    <source>
        <strain>NCTC 10247</strain>
    </source>
</reference>
<accession>A3MBT7</accession>
<dbReference type="EC" id="4.2.1.33" evidence="1"/>
<dbReference type="EMBL" id="CP000547">
    <property type="protein sequence ID" value="ABO02072.1"/>
    <property type="molecule type" value="Genomic_DNA"/>
</dbReference>
<dbReference type="RefSeq" id="WP_004187882.1">
    <property type="nucleotide sequence ID" value="NZ_CP007801.1"/>
</dbReference>
<dbReference type="SMR" id="A3MBT7"/>
<dbReference type="GeneID" id="93063904"/>
<dbReference type="KEGG" id="bmaz:BM44_3241"/>
<dbReference type="KEGG" id="bmn:BMA10247_A0522"/>
<dbReference type="PATRIC" id="fig|320389.8.peg.3638"/>
<dbReference type="UniPathway" id="UPA00048">
    <property type="reaction ID" value="UER00071"/>
</dbReference>
<dbReference type="GO" id="GO:0009316">
    <property type="term" value="C:3-isopropylmalate dehydratase complex"/>
    <property type="evidence" value="ECO:0007669"/>
    <property type="project" value="InterPro"/>
</dbReference>
<dbReference type="GO" id="GO:0003861">
    <property type="term" value="F:3-isopropylmalate dehydratase activity"/>
    <property type="evidence" value="ECO:0007669"/>
    <property type="project" value="UniProtKB-UniRule"/>
</dbReference>
<dbReference type="GO" id="GO:0009098">
    <property type="term" value="P:L-leucine biosynthetic process"/>
    <property type="evidence" value="ECO:0007669"/>
    <property type="project" value="UniProtKB-UniRule"/>
</dbReference>
<dbReference type="CDD" id="cd01577">
    <property type="entry name" value="IPMI_Swivel"/>
    <property type="match status" value="1"/>
</dbReference>
<dbReference type="FunFam" id="3.20.19.10:FF:000003">
    <property type="entry name" value="3-isopropylmalate dehydratase small subunit"/>
    <property type="match status" value="1"/>
</dbReference>
<dbReference type="Gene3D" id="3.20.19.10">
    <property type="entry name" value="Aconitase, domain 4"/>
    <property type="match status" value="1"/>
</dbReference>
<dbReference type="HAMAP" id="MF_01031">
    <property type="entry name" value="LeuD_type1"/>
    <property type="match status" value="1"/>
</dbReference>
<dbReference type="InterPro" id="IPR004431">
    <property type="entry name" value="3-IsopropMal_deHydase_ssu"/>
</dbReference>
<dbReference type="InterPro" id="IPR015928">
    <property type="entry name" value="Aconitase/3IPM_dehydase_swvl"/>
</dbReference>
<dbReference type="InterPro" id="IPR000573">
    <property type="entry name" value="AconitaseA/IPMdHydase_ssu_swvl"/>
</dbReference>
<dbReference type="InterPro" id="IPR033940">
    <property type="entry name" value="IPMI_Swivel"/>
</dbReference>
<dbReference type="InterPro" id="IPR050075">
    <property type="entry name" value="LeuD"/>
</dbReference>
<dbReference type="NCBIfam" id="TIGR00171">
    <property type="entry name" value="leuD"/>
    <property type="match status" value="1"/>
</dbReference>
<dbReference type="NCBIfam" id="NF002458">
    <property type="entry name" value="PRK01641.1"/>
    <property type="match status" value="1"/>
</dbReference>
<dbReference type="PANTHER" id="PTHR43345:SF5">
    <property type="entry name" value="3-ISOPROPYLMALATE DEHYDRATASE SMALL SUBUNIT"/>
    <property type="match status" value="1"/>
</dbReference>
<dbReference type="PANTHER" id="PTHR43345">
    <property type="entry name" value="3-ISOPROPYLMALATE DEHYDRATASE SMALL SUBUNIT 2-RELATED-RELATED"/>
    <property type="match status" value="1"/>
</dbReference>
<dbReference type="Pfam" id="PF00694">
    <property type="entry name" value="Aconitase_C"/>
    <property type="match status" value="1"/>
</dbReference>
<dbReference type="SUPFAM" id="SSF52016">
    <property type="entry name" value="LeuD/IlvD-like"/>
    <property type="match status" value="1"/>
</dbReference>
<organism>
    <name type="scientific">Burkholderia mallei (strain NCTC 10247)</name>
    <dbReference type="NCBI Taxonomy" id="320389"/>
    <lineage>
        <taxon>Bacteria</taxon>
        <taxon>Pseudomonadati</taxon>
        <taxon>Pseudomonadota</taxon>
        <taxon>Betaproteobacteria</taxon>
        <taxon>Burkholderiales</taxon>
        <taxon>Burkholderiaceae</taxon>
        <taxon>Burkholderia</taxon>
        <taxon>pseudomallei group</taxon>
    </lineage>
</organism>
<sequence length="216" mass="24726">MEKFNVHTGVVAPLDRENVDTDAIIPKQFLKSIKRTGFGPNAFDEWRYLDHGEPGQDNSKRPLNPDFVLNQPRYQGASVLLARKNFGCGSSREHAPWALQQYGFRAIVAPSFADIFFNNCYKNGLLPIVLTEQQVDHLFNDTYAFNGYQLTIDLDAQVVRAPDGREYPFEITAFRKYCLLNGFDDIGLTLRHADKIRQFEAERLAKQPWLDNRLVG</sequence>
<keyword id="KW-0028">Amino-acid biosynthesis</keyword>
<keyword id="KW-0100">Branched-chain amino acid biosynthesis</keyword>
<keyword id="KW-0432">Leucine biosynthesis</keyword>
<keyword id="KW-0456">Lyase</keyword>
<gene>
    <name evidence="1" type="primary">leuD</name>
    <name type="ordered locus">BMA10247_A0522</name>
</gene>
<name>LEUD_BURM7</name>
<feature type="chain" id="PRO_1000063741" description="3-isopropylmalate dehydratase small subunit">
    <location>
        <begin position="1"/>
        <end position="216"/>
    </location>
</feature>